<organism>
    <name type="scientific">Shewanella sp. (strain MR-7)</name>
    <dbReference type="NCBI Taxonomy" id="60481"/>
    <lineage>
        <taxon>Bacteria</taxon>
        <taxon>Pseudomonadati</taxon>
        <taxon>Pseudomonadota</taxon>
        <taxon>Gammaproteobacteria</taxon>
        <taxon>Alteromonadales</taxon>
        <taxon>Shewanellaceae</taxon>
        <taxon>Shewanella</taxon>
    </lineage>
</organism>
<reference key="1">
    <citation type="submission" date="2006-08" db="EMBL/GenBank/DDBJ databases">
        <title>Complete sequence of chromosome 1 of Shewanella sp. MR-7.</title>
        <authorList>
            <person name="Copeland A."/>
            <person name="Lucas S."/>
            <person name="Lapidus A."/>
            <person name="Barry K."/>
            <person name="Detter J.C."/>
            <person name="Glavina del Rio T."/>
            <person name="Hammon N."/>
            <person name="Israni S."/>
            <person name="Dalin E."/>
            <person name="Tice H."/>
            <person name="Pitluck S."/>
            <person name="Kiss H."/>
            <person name="Brettin T."/>
            <person name="Bruce D."/>
            <person name="Han C."/>
            <person name="Tapia R."/>
            <person name="Gilna P."/>
            <person name="Schmutz J."/>
            <person name="Larimer F."/>
            <person name="Land M."/>
            <person name="Hauser L."/>
            <person name="Kyrpides N."/>
            <person name="Mikhailova N."/>
            <person name="Nealson K."/>
            <person name="Konstantinidis K."/>
            <person name="Klappenbach J."/>
            <person name="Tiedje J."/>
            <person name="Richardson P."/>
        </authorList>
    </citation>
    <scope>NUCLEOTIDE SEQUENCE [LARGE SCALE GENOMIC DNA]</scope>
    <source>
        <strain>MR-7</strain>
    </source>
</reference>
<accession>Q0HZU1</accession>
<sequence length="57" mass="6733">MAKAKGNREKIKLVSTAKTGHFYTTEKNKRNMPEKMEIKKFDPVIRQHVIYKEAKIK</sequence>
<keyword id="KW-0687">Ribonucleoprotein</keyword>
<keyword id="KW-0689">Ribosomal protein</keyword>
<protein>
    <recommendedName>
        <fullName evidence="1">Large ribosomal subunit protein bL33</fullName>
    </recommendedName>
    <alternativeName>
        <fullName evidence="2">50S ribosomal protein L33</fullName>
    </alternativeName>
</protein>
<gene>
    <name evidence="1" type="primary">rpmG</name>
    <name type="ordered locus">Shewmr7_0361</name>
</gene>
<proteinExistence type="inferred from homology"/>
<comment type="similarity">
    <text evidence="1">Belongs to the bacterial ribosomal protein bL33 family.</text>
</comment>
<dbReference type="EMBL" id="CP000444">
    <property type="protein sequence ID" value="ABI41364.1"/>
    <property type="molecule type" value="Genomic_DNA"/>
</dbReference>
<dbReference type="SMR" id="Q0HZU1"/>
<dbReference type="KEGG" id="shm:Shewmr7_0361"/>
<dbReference type="HOGENOM" id="CLU_190949_1_1_6"/>
<dbReference type="GO" id="GO:0022625">
    <property type="term" value="C:cytosolic large ribosomal subunit"/>
    <property type="evidence" value="ECO:0007669"/>
    <property type="project" value="TreeGrafter"/>
</dbReference>
<dbReference type="GO" id="GO:0003735">
    <property type="term" value="F:structural constituent of ribosome"/>
    <property type="evidence" value="ECO:0007669"/>
    <property type="project" value="InterPro"/>
</dbReference>
<dbReference type="GO" id="GO:0006412">
    <property type="term" value="P:translation"/>
    <property type="evidence" value="ECO:0007669"/>
    <property type="project" value="UniProtKB-UniRule"/>
</dbReference>
<dbReference type="FunFam" id="2.20.28.120:FF:000001">
    <property type="entry name" value="50S ribosomal protein L33"/>
    <property type="match status" value="1"/>
</dbReference>
<dbReference type="Gene3D" id="2.20.28.120">
    <property type="entry name" value="Ribosomal protein L33"/>
    <property type="match status" value="1"/>
</dbReference>
<dbReference type="HAMAP" id="MF_00294">
    <property type="entry name" value="Ribosomal_bL33"/>
    <property type="match status" value="1"/>
</dbReference>
<dbReference type="InterPro" id="IPR001705">
    <property type="entry name" value="Ribosomal_bL33"/>
</dbReference>
<dbReference type="InterPro" id="IPR018264">
    <property type="entry name" value="Ribosomal_bL33_CS"/>
</dbReference>
<dbReference type="InterPro" id="IPR038584">
    <property type="entry name" value="Ribosomal_bL33_sf"/>
</dbReference>
<dbReference type="InterPro" id="IPR011332">
    <property type="entry name" value="Ribosomal_zn-bd"/>
</dbReference>
<dbReference type="NCBIfam" id="NF001860">
    <property type="entry name" value="PRK00595.1"/>
    <property type="match status" value="1"/>
</dbReference>
<dbReference type="NCBIfam" id="TIGR01023">
    <property type="entry name" value="rpmG_bact"/>
    <property type="match status" value="1"/>
</dbReference>
<dbReference type="PANTHER" id="PTHR15238">
    <property type="entry name" value="54S RIBOSOMAL PROTEIN L39, MITOCHONDRIAL"/>
    <property type="match status" value="1"/>
</dbReference>
<dbReference type="PANTHER" id="PTHR15238:SF1">
    <property type="entry name" value="LARGE RIBOSOMAL SUBUNIT PROTEIN BL33M"/>
    <property type="match status" value="1"/>
</dbReference>
<dbReference type="Pfam" id="PF00471">
    <property type="entry name" value="Ribosomal_L33"/>
    <property type="match status" value="1"/>
</dbReference>
<dbReference type="SUPFAM" id="SSF57829">
    <property type="entry name" value="Zn-binding ribosomal proteins"/>
    <property type="match status" value="1"/>
</dbReference>
<dbReference type="PROSITE" id="PS00582">
    <property type="entry name" value="RIBOSOMAL_L33"/>
    <property type="match status" value="1"/>
</dbReference>
<name>RL33_SHESR</name>
<feature type="chain" id="PRO_0000356666" description="Large ribosomal subunit protein bL33">
    <location>
        <begin position="1"/>
        <end position="57"/>
    </location>
</feature>
<evidence type="ECO:0000255" key="1">
    <source>
        <dbReference type="HAMAP-Rule" id="MF_00294"/>
    </source>
</evidence>
<evidence type="ECO:0000305" key="2"/>